<reference key="1">
    <citation type="journal article" date="2000" name="Nature">
        <title>Sequence and analysis of chromosome 1 of the plant Arabidopsis thaliana.</title>
        <authorList>
            <person name="Theologis A."/>
            <person name="Ecker J.R."/>
            <person name="Palm C.J."/>
            <person name="Federspiel N.A."/>
            <person name="Kaul S."/>
            <person name="White O."/>
            <person name="Alonso J."/>
            <person name="Altafi H."/>
            <person name="Araujo R."/>
            <person name="Bowman C.L."/>
            <person name="Brooks S.Y."/>
            <person name="Buehler E."/>
            <person name="Chan A."/>
            <person name="Chao Q."/>
            <person name="Chen H."/>
            <person name="Cheuk R.F."/>
            <person name="Chin C.W."/>
            <person name="Chung M.K."/>
            <person name="Conn L."/>
            <person name="Conway A.B."/>
            <person name="Conway A.R."/>
            <person name="Creasy T.H."/>
            <person name="Dewar K."/>
            <person name="Dunn P."/>
            <person name="Etgu P."/>
            <person name="Feldblyum T.V."/>
            <person name="Feng J.-D."/>
            <person name="Fong B."/>
            <person name="Fujii C.Y."/>
            <person name="Gill J.E."/>
            <person name="Goldsmith A.D."/>
            <person name="Haas B."/>
            <person name="Hansen N.F."/>
            <person name="Hughes B."/>
            <person name="Huizar L."/>
            <person name="Hunter J.L."/>
            <person name="Jenkins J."/>
            <person name="Johnson-Hopson C."/>
            <person name="Khan S."/>
            <person name="Khaykin E."/>
            <person name="Kim C.J."/>
            <person name="Koo H.L."/>
            <person name="Kremenetskaia I."/>
            <person name="Kurtz D.B."/>
            <person name="Kwan A."/>
            <person name="Lam B."/>
            <person name="Langin-Hooper S."/>
            <person name="Lee A."/>
            <person name="Lee J.M."/>
            <person name="Lenz C.A."/>
            <person name="Li J.H."/>
            <person name="Li Y.-P."/>
            <person name="Lin X."/>
            <person name="Liu S.X."/>
            <person name="Liu Z.A."/>
            <person name="Luros J.S."/>
            <person name="Maiti R."/>
            <person name="Marziali A."/>
            <person name="Militscher J."/>
            <person name="Miranda M."/>
            <person name="Nguyen M."/>
            <person name="Nierman W.C."/>
            <person name="Osborne B.I."/>
            <person name="Pai G."/>
            <person name="Peterson J."/>
            <person name="Pham P.K."/>
            <person name="Rizzo M."/>
            <person name="Rooney T."/>
            <person name="Rowley D."/>
            <person name="Sakano H."/>
            <person name="Salzberg S.L."/>
            <person name="Schwartz J.R."/>
            <person name="Shinn P."/>
            <person name="Southwick A.M."/>
            <person name="Sun H."/>
            <person name="Tallon L.J."/>
            <person name="Tambunga G."/>
            <person name="Toriumi M.J."/>
            <person name="Town C.D."/>
            <person name="Utterback T."/>
            <person name="Van Aken S."/>
            <person name="Vaysberg M."/>
            <person name="Vysotskaia V.S."/>
            <person name="Walker M."/>
            <person name="Wu D."/>
            <person name="Yu G."/>
            <person name="Fraser C.M."/>
            <person name="Venter J.C."/>
            <person name="Davis R.W."/>
        </authorList>
    </citation>
    <scope>NUCLEOTIDE SEQUENCE [LARGE SCALE GENOMIC DNA]</scope>
    <source>
        <strain>cv. Columbia</strain>
    </source>
</reference>
<reference key="2">
    <citation type="journal article" date="2017" name="Plant J.">
        <title>Araport11: a complete reannotation of the Arabidopsis thaliana reference genome.</title>
        <authorList>
            <person name="Cheng C.Y."/>
            <person name="Krishnakumar V."/>
            <person name="Chan A.P."/>
            <person name="Thibaud-Nissen F."/>
            <person name="Schobel S."/>
            <person name="Town C.D."/>
        </authorList>
    </citation>
    <scope>GENOME REANNOTATION</scope>
    <source>
        <strain>cv. Columbia</strain>
    </source>
</reference>
<reference key="3">
    <citation type="journal article" date="2004" name="Genome Res.">
        <title>Whole genome sequence comparisons and 'full-length' cDNA sequences: a combined approach to evaluate and improve Arabidopsis genome annotation.</title>
        <authorList>
            <person name="Castelli V."/>
            <person name="Aury J.-M."/>
            <person name="Jaillon O."/>
            <person name="Wincker P."/>
            <person name="Clepet C."/>
            <person name="Menard M."/>
            <person name="Cruaud C."/>
            <person name="Quetier F."/>
            <person name="Scarpelli C."/>
            <person name="Schaechter V."/>
            <person name="Temple G."/>
            <person name="Caboche M."/>
            <person name="Weissenbach J."/>
            <person name="Salanoubat M."/>
        </authorList>
    </citation>
    <scope>NUCLEOTIDE SEQUENCE [LARGE SCALE MRNA] OF 59-566</scope>
    <source>
        <strain>cv. Columbia</strain>
    </source>
</reference>
<reference key="4">
    <citation type="journal article" date="2005" name="Plant Sci.">
        <title>Reduced expression of a protein homologous to glycogenin leads to reduction of starch content in Arabidopsis leaves.</title>
        <authorList>
            <person name="Chatterjee M."/>
            <person name="Berbezy P."/>
            <person name="Vyas D."/>
            <person name="Coates S."/>
            <person name="Barsby T."/>
        </authorList>
        <dbReference type="AGRICOLA" id="IND43669941"/>
    </citation>
    <scope>GENE FAMILY</scope>
</reference>
<feature type="chain" id="PRO_0000416737" description="Putative UDP-glucuronate:xylan alpha-glucuronosyltransferase 5">
    <location>
        <begin position="1"/>
        <end position="566"/>
    </location>
</feature>
<feature type="transmembrane region" description="Helical; Signal-anchor for type II membrane protein" evidence="4">
    <location>
        <begin position="17"/>
        <end position="37"/>
    </location>
</feature>
<feature type="binding site" evidence="3">
    <location>
        <begin position="372"/>
        <end position="374"/>
    </location>
    <ligand>
        <name>substrate</name>
    </ligand>
</feature>
<feature type="binding site" evidence="3">
    <location>
        <position position="372"/>
    </location>
    <ligand>
        <name>Mn(2+)</name>
        <dbReference type="ChEBI" id="CHEBI:29035"/>
    </ligand>
</feature>
<feature type="binding site" evidence="3">
    <location>
        <position position="374"/>
    </location>
    <ligand>
        <name>Mn(2+)</name>
        <dbReference type="ChEBI" id="CHEBI:29035"/>
    </ligand>
</feature>
<feature type="binding site" evidence="3">
    <location>
        <begin position="401"/>
        <end position="403"/>
    </location>
    <ligand>
        <name>substrate</name>
    </ligand>
</feature>
<feature type="binding site" evidence="3">
    <location>
        <begin position="428"/>
        <end position="432"/>
    </location>
    <ligand>
        <name>substrate</name>
    </ligand>
</feature>
<feature type="binding site" evidence="3">
    <location>
        <begin position="475"/>
        <end position="480"/>
    </location>
    <ligand>
        <name>substrate</name>
    </ligand>
</feature>
<feature type="binding site" evidence="3">
    <location>
        <position position="475"/>
    </location>
    <ligand>
        <name>Mn(2+)</name>
        <dbReference type="ChEBI" id="CHEBI:29035"/>
    </ligand>
</feature>
<feature type="site" description="Important for catalytic activity" evidence="2">
    <location>
        <position position="356"/>
    </location>
</feature>
<accession>F4HZC3</accession>
<accession>O04031</accession>
<organism>
    <name type="scientific">Arabidopsis thaliana</name>
    <name type="common">Mouse-ear cress</name>
    <dbReference type="NCBI Taxonomy" id="3702"/>
    <lineage>
        <taxon>Eukaryota</taxon>
        <taxon>Viridiplantae</taxon>
        <taxon>Streptophyta</taxon>
        <taxon>Embryophyta</taxon>
        <taxon>Tracheophyta</taxon>
        <taxon>Spermatophyta</taxon>
        <taxon>Magnoliopsida</taxon>
        <taxon>eudicotyledons</taxon>
        <taxon>Gunneridae</taxon>
        <taxon>Pentapetalae</taxon>
        <taxon>rosids</taxon>
        <taxon>malvids</taxon>
        <taxon>Brassicales</taxon>
        <taxon>Brassicaceae</taxon>
        <taxon>Camelineae</taxon>
        <taxon>Arabidopsis</taxon>
    </lineage>
</organism>
<dbReference type="EC" id="2.4.1.-"/>
<dbReference type="EMBL" id="AC000106">
    <property type="protein sequence ID" value="AAB70408.1"/>
    <property type="status" value="ALT_SEQ"/>
    <property type="molecule type" value="Genomic_DNA"/>
</dbReference>
<dbReference type="EMBL" id="CP002684">
    <property type="protein sequence ID" value="AEE28380.1"/>
    <property type="molecule type" value="Genomic_DNA"/>
</dbReference>
<dbReference type="EMBL" id="BX815902">
    <property type="status" value="NOT_ANNOTATED_CDS"/>
    <property type="molecule type" value="mRNA"/>
</dbReference>
<dbReference type="PIR" id="G86221">
    <property type="entry name" value="G86221"/>
</dbReference>
<dbReference type="RefSeq" id="NP_172373.3">
    <property type="nucleotide sequence ID" value="NM_100770.5"/>
</dbReference>
<dbReference type="SMR" id="F4HZC3"/>
<dbReference type="FunCoup" id="F4HZC3">
    <property type="interactions" value="59"/>
</dbReference>
<dbReference type="STRING" id="3702.F4HZC3"/>
<dbReference type="CAZy" id="GT8">
    <property type="family name" value="Glycosyltransferase Family 8"/>
</dbReference>
<dbReference type="iPTMnet" id="F4HZC3"/>
<dbReference type="PaxDb" id="3702-AT1G08990.1"/>
<dbReference type="ProteomicsDB" id="247322"/>
<dbReference type="EnsemblPlants" id="AT1G08990.1">
    <property type="protein sequence ID" value="AT1G08990.1"/>
    <property type="gene ID" value="AT1G08990"/>
</dbReference>
<dbReference type="GeneID" id="837420"/>
<dbReference type="Gramene" id="AT1G08990.1">
    <property type="protein sequence ID" value="AT1G08990.1"/>
    <property type="gene ID" value="AT1G08990"/>
</dbReference>
<dbReference type="KEGG" id="ath:AT1G08990"/>
<dbReference type="Araport" id="AT1G08990"/>
<dbReference type="TAIR" id="AT1G08990">
    <property type="gene designation" value="PGSIP5"/>
</dbReference>
<dbReference type="eggNOG" id="KOG1950">
    <property type="taxonomic scope" value="Eukaryota"/>
</dbReference>
<dbReference type="HOGENOM" id="CLU_023070_1_0_1"/>
<dbReference type="InParanoid" id="F4HZC3"/>
<dbReference type="OMA" id="AGWKIKQ"/>
<dbReference type="PRO" id="PR:F4HZC3"/>
<dbReference type="Proteomes" id="UP000006548">
    <property type="component" value="Chromosome 1"/>
</dbReference>
<dbReference type="ExpressionAtlas" id="F4HZC3">
    <property type="expression patterns" value="baseline and differential"/>
</dbReference>
<dbReference type="GO" id="GO:0005794">
    <property type="term" value="C:Golgi apparatus"/>
    <property type="evidence" value="ECO:0000314"/>
    <property type="project" value="TAIR"/>
</dbReference>
<dbReference type="GO" id="GO:0000139">
    <property type="term" value="C:Golgi membrane"/>
    <property type="evidence" value="ECO:0007669"/>
    <property type="project" value="UniProtKB-SubCell"/>
</dbReference>
<dbReference type="GO" id="GO:0016757">
    <property type="term" value="F:glycosyltransferase activity"/>
    <property type="evidence" value="ECO:0007669"/>
    <property type="project" value="UniProtKB-KW"/>
</dbReference>
<dbReference type="GO" id="GO:0046872">
    <property type="term" value="F:metal ion binding"/>
    <property type="evidence" value="ECO:0007669"/>
    <property type="project" value="UniProtKB-KW"/>
</dbReference>
<dbReference type="GO" id="GO:0071555">
    <property type="term" value="P:cell wall organization"/>
    <property type="evidence" value="ECO:0007669"/>
    <property type="project" value="UniProtKB-KW"/>
</dbReference>
<dbReference type="CDD" id="cd02537">
    <property type="entry name" value="GT8_Glycogenin"/>
    <property type="match status" value="1"/>
</dbReference>
<dbReference type="FunFam" id="3.90.550.10:FF:000018">
    <property type="entry name" value="Hexosyltransferase"/>
    <property type="match status" value="1"/>
</dbReference>
<dbReference type="Gene3D" id="3.90.550.10">
    <property type="entry name" value="Spore Coat Polysaccharide Biosynthesis Protein SpsA, Chain A"/>
    <property type="match status" value="1"/>
</dbReference>
<dbReference type="InterPro" id="IPR002495">
    <property type="entry name" value="Glyco_trans_8"/>
</dbReference>
<dbReference type="InterPro" id="IPR050587">
    <property type="entry name" value="GNT1/Glycosyltrans_8"/>
</dbReference>
<dbReference type="InterPro" id="IPR029044">
    <property type="entry name" value="Nucleotide-diphossugar_trans"/>
</dbReference>
<dbReference type="PANTHER" id="PTHR11183">
    <property type="entry name" value="GLYCOGENIN SUBFAMILY MEMBER"/>
    <property type="match status" value="1"/>
</dbReference>
<dbReference type="Pfam" id="PF01501">
    <property type="entry name" value="Glyco_transf_8"/>
    <property type="match status" value="2"/>
</dbReference>
<dbReference type="SUPFAM" id="SSF53448">
    <property type="entry name" value="Nucleotide-diphospho-sugar transferases"/>
    <property type="match status" value="1"/>
</dbReference>
<protein>
    <recommendedName>
        <fullName>Putative UDP-glucuronate:xylan alpha-glucuronosyltransferase 5</fullName>
        <shortName>UDP-GlcA:xylan glucuronyltransferase 5</shortName>
        <ecNumber>2.4.1.-</ecNumber>
    </recommendedName>
    <alternativeName>
        <fullName>Glycogenin-like protein 5</fullName>
    </alternativeName>
    <alternativeName>
        <fullName>Plant glycogenin-like starch initiation protein 5</fullName>
    </alternativeName>
    <alternativeName>
        <fullName>Protein GLUCURONIC ACID SUBSTITUTION OF XYLAN 5</fullName>
        <shortName>AtGUX5</shortName>
    </alternativeName>
</protein>
<proteinExistence type="evidence at transcript level"/>
<name>GUX5_ARATH</name>
<keyword id="KW-0961">Cell wall biogenesis/degradation</keyword>
<keyword id="KW-0328">Glycosyltransferase</keyword>
<keyword id="KW-0333">Golgi apparatus</keyword>
<keyword id="KW-0464">Manganese</keyword>
<keyword id="KW-0472">Membrane</keyword>
<keyword id="KW-0479">Metal-binding</keyword>
<keyword id="KW-1185">Reference proteome</keyword>
<keyword id="KW-0735">Signal-anchor</keyword>
<keyword id="KW-0808">Transferase</keyword>
<keyword id="KW-0812">Transmembrane</keyword>
<keyword id="KW-1133">Transmembrane helix</keyword>
<comment type="function">
    <text evidence="1">May be involved in the substitutions of the xylan backbone in stem glucuronoxylan.</text>
</comment>
<comment type="cofactor">
    <cofactor evidence="3">
        <name>Mn(2+)</name>
        <dbReference type="ChEBI" id="CHEBI:29035"/>
    </cofactor>
</comment>
<comment type="subcellular location">
    <subcellularLocation>
        <location evidence="5">Golgi apparatus membrane</location>
        <topology evidence="5">Single-pass type II membrane protein</topology>
    </subcellularLocation>
</comment>
<comment type="similarity">
    <text evidence="5">Belongs to the glycosyltransferase 8 family. Glycogenin subfamily.</text>
</comment>
<comment type="sequence caution" evidence="5">
    <conflict type="erroneous gene model prediction">
        <sequence resource="EMBL-CDS" id="AAB70408"/>
    </conflict>
</comment>
<comment type="sequence caution" evidence="5">
    <conflict type="miscellaneous discrepancy">
        <sequence resource="EMBL" id="BX815902"/>
    </conflict>
    <text>Sequencing errors.</text>
</comment>
<sequence length="566" mass="65633">MGAKSKSSSTRFFMFYLILISLSFLGLLLNFKPLFLLNPMIASPSIVEIRYSLPEPVKRTPIWLRLIRNYLPDEKKIRVGLLNIAENERESYEASGTSILENVHVSLDPLPNNLTWTSLFPVWIDEDHTWHIPSCPEVPLPKMEGSEADVDVVVVKVPCDGFSEKRGLRDVFRLQVNLAAANLVVESGRRNVDRTVYVVFIGSCGPMHEIFRCDERVKRVGDYWVYRPDLTRLKQKLLMPPGSCQIAPLGQGEAWIQDKNRNLTSEKTTLSSFTAQRVAYVTLLHSSEVYVCGAIALAQSIRQSGSTKDMILLHDDSITNISLIGLSLAGWKLRRVERIRSPFSKKRSYNEWNYSKLRVWQVTDYDKLVFIDADFIIVKNIDYLFSYPQLSAAGNNKVLFNSGVMVLEPSACLFEDLMLKSFKIGSYNGGDQGFLNEYFVWWHRLSKRLNTMKYFGDESRHDKARNLPENLEGIHYLGLKPWRCYRDYDCNWDLKTRRVYASESVHARWWKVYDKMPKKLKGYCGLNLKMEKNVEKWRKMAKLNGFPENHWKIRIKDPRKKNRLSQ</sequence>
<evidence type="ECO:0000250" key="1"/>
<evidence type="ECO:0000250" key="2">
    <source>
        <dbReference type="UniProtKB" id="P13280"/>
    </source>
</evidence>
<evidence type="ECO:0000250" key="3">
    <source>
        <dbReference type="UniProtKB" id="P46976"/>
    </source>
</evidence>
<evidence type="ECO:0000255" key="4"/>
<evidence type="ECO:0000305" key="5"/>
<gene>
    <name type="primary">GUX5</name>
    <name type="synonym">PGSIP5</name>
    <name type="ordered locus">At1g08990</name>
    <name type="ORF">F7G19.14</name>
</gene>